<name>Y1514_LACDB</name>
<feature type="chain" id="PRO_1000197660" description="Nucleoid-associated protein LBUL_1514">
    <location>
        <begin position="1"/>
        <end position="109"/>
    </location>
</feature>
<reference key="1">
    <citation type="journal article" date="2006" name="Proc. Natl. Acad. Sci. U.S.A.">
        <title>Comparative genomics of the lactic acid bacteria.</title>
        <authorList>
            <person name="Makarova K.S."/>
            <person name="Slesarev A."/>
            <person name="Wolf Y.I."/>
            <person name="Sorokin A."/>
            <person name="Mirkin B."/>
            <person name="Koonin E.V."/>
            <person name="Pavlov A."/>
            <person name="Pavlova N."/>
            <person name="Karamychev V."/>
            <person name="Polouchine N."/>
            <person name="Shakhova V."/>
            <person name="Grigoriev I."/>
            <person name="Lou Y."/>
            <person name="Rohksar D."/>
            <person name="Lucas S."/>
            <person name="Huang K."/>
            <person name="Goodstein D.M."/>
            <person name="Hawkins T."/>
            <person name="Plengvidhya V."/>
            <person name="Welker D."/>
            <person name="Hughes J."/>
            <person name="Goh Y."/>
            <person name="Benson A."/>
            <person name="Baldwin K."/>
            <person name="Lee J.-H."/>
            <person name="Diaz-Muniz I."/>
            <person name="Dosti B."/>
            <person name="Smeianov V."/>
            <person name="Wechter W."/>
            <person name="Barabote R."/>
            <person name="Lorca G."/>
            <person name="Altermann E."/>
            <person name="Barrangou R."/>
            <person name="Ganesan B."/>
            <person name="Xie Y."/>
            <person name="Rawsthorne H."/>
            <person name="Tamir D."/>
            <person name="Parker C."/>
            <person name="Breidt F."/>
            <person name="Broadbent J.R."/>
            <person name="Hutkins R."/>
            <person name="O'Sullivan D."/>
            <person name="Steele J."/>
            <person name="Unlu G."/>
            <person name="Saier M.H. Jr."/>
            <person name="Klaenhammer T."/>
            <person name="Richardson P."/>
            <person name="Kozyavkin S."/>
            <person name="Weimer B.C."/>
            <person name="Mills D.A."/>
        </authorList>
    </citation>
    <scope>NUCLEOTIDE SEQUENCE [LARGE SCALE GENOMIC DNA]</scope>
    <source>
        <strain>ATCC BAA-365 / Lb-18</strain>
    </source>
</reference>
<protein>
    <recommendedName>
        <fullName evidence="1">Nucleoid-associated protein LBUL_1514</fullName>
    </recommendedName>
</protein>
<evidence type="ECO:0000255" key="1">
    <source>
        <dbReference type="HAMAP-Rule" id="MF_00274"/>
    </source>
</evidence>
<organism>
    <name type="scientific">Lactobacillus delbrueckii subsp. bulgaricus (strain ATCC BAA-365 / Lb-18)</name>
    <dbReference type="NCBI Taxonomy" id="321956"/>
    <lineage>
        <taxon>Bacteria</taxon>
        <taxon>Bacillati</taxon>
        <taxon>Bacillota</taxon>
        <taxon>Bacilli</taxon>
        <taxon>Lactobacillales</taxon>
        <taxon>Lactobacillaceae</taxon>
        <taxon>Lactobacillus</taxon>
    </lineage>
</organism>
<proteinExistence type="inferred from homology"/>
<sequence length="109" mass="12129">MSKRPAFPGMGGMNMQQMMKQAKKLQEQMAKEQENITTQEFTGKAADDMVVATFTGDRTLKSLFIKPEAIDPDDPDMLEDLVIDAVNKGLKQIDQATQQSLGKYTKGLM</sequence>
<accession>Q048W5</accession>
<dbReference type="EMBL" id="CP000412">
    <property type="protein sequence ID" value="ABJ59007.1"/>
    <property type="molecule type" value="Genomic_DNA"/>
</dbReference>
<dbReference type="RefSeq" id="WP_011678494.1">
    <property type="nucleotide sequence ID" value="NC_008529.1"/>
</dbReference>
<dbReference type="SMR" id="Q048W5"/>
<dbReference type="KEGG" id="lbu:LBUL_1514"/>
<dbReference type="HOGENOM" id="CLU_140930_1_1_9"/>
<dbReference type="BioCyc" id="LDEL321956:LBUL_RS07155-MONOMER"/>
<dbReference type="GO" id="GO:0043590">
    <property type="term" value="C:bacterial nucleoid"/>
    <property type="evidence" value="ECO:0007669"/>
    <property type="project" value="UniProtKB-UniRule"/>
</dbReference>
<dbReference type="GO" id="GO:0005829">
    <property type="term" value="C:cytosol"/>
    <property type="evidence" value="ECO:0007669"/>
    <property type="project" value="TreeGrafter"/>
</dbReference>
<dbReference type="GO" id="GO:0003677">
    <property type="term" value="F:DNA binding"/>
    <property type="evidence" value="ECO:0007669"/>
    <property type="project" value="UniProtKB-UniRule"/>
</dbReference>
<dbReference type="Gene3D" id="3.30.1310.10">
    <property type="entry name" value="Nucleoid-associated protein YbaB-like domain"/>
    <property type="match status" value="1"/>
</dbReference>
<dbReference type="HAMAP" id="MF_00274">
    <property type="entry name" value="DNA_YbaB_EbfC"/>
    <property type="match status" value="1"/>
</dbReference>
<dbReference type="InterPro" id="IPR036894">
    <property type="entry name" value="YbaB-like_sf"/>
</dbReference>
<dbReference type="InterPro" id="IPR004401">
    <property type="entry name" value="YbaB/EbfC"/>
</dbReference>
<dbReference type="NCBIfam" id="TIGR00103">
    <property type="entry name" value="DNA_YbaB_EbfC"/>
    <property type="match status" value="1"/>
</dbReference>
<dbReference type="PANTHER" id="PTHR33449">
    <property type="entry name" value="NUCLEOID-ASSOCIATED PROTEIN YBAB"/>
    <property type="match status" value="1"/>
</dbReference>
<dbReference type="PANTHER" id="PTHR33449:SF1">
    <property type="entry name" value="NUCLEOID-ASSOCIATED PROTEIN YBAB"/>
    <property type="match status" value="1"/>
</dbReference>
<dbReference type="Pfam" id="PF02575">
    <property type="entry name" value="YbaB_DNA_bd"/>
    <property type="match status" value="1"/>
</dbReference>
<dbReference type="PIRSF" id="PIRSF004555">
    <property type="entry name" value="UCP004555"/>
    <property type="match status" value="1"/>
</dbReference>
<dbReference type="SUPFAM" id="SSF82607">
    <property type="entry name" value="YbaB-like"/>
    <property type="match status" value="1"/>
</dbReference>
<gene>
    <name type="ordered locus">LBUL_1514</name>
</gene>
<comment type="function">
    <text evidence="1">Binds to DNA and alters its conformation. May be involved in regulation of gene expression, nucleoid organization and DNA protection.</text>
</comment>
<comment type="subunit">
    <text evidence="1">Homodimer.</text>
</comment>
<comment type="subcellular location">
    <subcellularLocation>
        <location evidence="1">Cytoplasm</location>
        <location evidence="1">Nucleoid</location>
    </subcellularLocation>
</comment>
<comment type="similarity">
    <text evidence="1">Belongs to the YbaB/EbfC family.</text>
</comment>
<keyword id="KW-0963">Cytoplasm</keyword>
<keyword id="KW-0238">DNA-binding</keyword>